<protein>
    <recommendedName>
        <fullName evidence="1">UDP-N-acetylmuramoyl-L-alanyl-D-glutamate--2,6-diaminopimelate ligase</fullName>
        <ecNumber evidence="1">6.3.2.13</ecNumber>
    </recommendedName>
    <alternativeName>
        <fullName evidence="1">Meso-A2pm-adding enzyme</fullName>
    </alternativeName>
    <alternativeName>
        <fullName evidence="1">Meso-diaminopimelate-adding enzyme</fullName>
    </alternativeName>
    <alternativeName>
        <fullName evidence="1">UDP-MurNAc-L-Ala-D-Glu:meso-diaminopimelate ligase</fullName>
    </alternativeName>
    <alternativeName>
        <fullName evidence="1">UDP-MurNAc-tripeptide synthetase</fullName>
    </alternativeName>
    <alternativeName>
        <fullName evidence="1">UDP-N-acetylmuramyl-tripeptide synthetase</fullName>
    </alternativeName>
</protein>
<gene>
    <name evidence="1" type="primary">murE</name>
    <name type="ordered locus">CAB363</name>
</gene>
<keyword id="KW-0067">ATP-binding</keyword>
<keyword id="KW-0131">Cell cycle</keyword>
<keyword id="KW-0132">Cell division</keyword>
<keyword id="KW-0133">Cell shape</keyword>
<keyword id="KW-0961">Cell wall biogenesis/degradation</keyword>
<keyword id="KW-0963">Cytoplasm</keyword>
<keyword id="KW-0436">Ligase</keyword>
<keyword id="KW-0460">Magnesium</keyword>
<keyword id="KW-0547">Nucleotide-binding</keyword>
<keyword id="KW-0573">Peptidoglycan synthesis</keyword>
<dbReference type="EC" id="6.3.2.13" evidence="1"/>
<dbReference type="EMBL" id="CR848038">
    <property type="protein sequence ID" value="CAH63816.1"/>
    <property type="molecule type" value="Genomic_DNA"/>
</dbReference>
<dbReference type="RefSeq" id="WP_011097018.1">
    <property type="nucleotide sequence ID" value="NC_004552.2"/>
</dbReference>
<dbReference type="SMR" id="Q5L6B2"/>
<dbReference type="KEGG" id="cab:CAB363"/>
<dbReference type="eggNOG" id="COG0769">
    <property type="taxonomic scope" value="Bacteria"/>
</dbReference>
<dbReference type="HOGENOM" id="CLU_022291_4_1_0"/>
<dbReference type="OrthoDB" id="9800958at2"/>
<dbReference type="UniPathway" id="UPA00219"/>
<dbReference type="Proteomes" id="UP000001012">
    <property type="component" value="Chromosome"/>
</dbReference>
<dbReference type="GO" id="GO:0005737">
    <property type="term" value="C:cytoplasm"/>
    <property type="evidence" value="ECO:0007669"/>
    <property type="project" value="UniProtKB-SubCell"/>
</dbReference>
<dbReference type="GO" id="GO:0005524">
    <property type="term" value="F:ATP binding"/>
    <property type="evidence" value="ECO:0007669"/>
    <property type="project" value="UniProtKB-UniRule"/>
</dbReference>
<dbReference type="GO" id="GO:0000287">
    <property type="term" value="F:magnesium ion binding"/>
    <property type="evidence" value="ECO:0007669"/>
    <property type="project" value="UniProtKB-UniRule"/>
</dbReference>
<dbReference type="GO" id="GO:0008765">
    <property type="term" value="F:UDP-N-acetylmuramoylalanyl-D-glutamate-2,6-diaminopimelate ligase activity"/>
    <property type="evidence" value="ECO:0007669"/>
    <property type="project" value="UniProtKB-UniRule"/>
</dbReference>
<dbReference type="GO" id="GO:0051301">
    <property type="term" value="P:cell division"/>
    <property type="evidence" value="ECO:0007669"/>
    <property type="project" value="UniProtKB-KW"/>
</dbReference>
<dbReference type="GO" id="GO:0071555">
    <property type="term" value="P:cell wall organization"/>
    <property type="evidence" value="ECO:0007669"/>
    <property type="project" value="UniProtKB-KW"/>
</dbReference>
<dbReference type="GO" id="GO:0009252">
    <property type="term" value="P:peptidoglycan biosynthetic process"/>
    <property type="evidence" value="ECO:0007669"/>
    <property type="project" value="UniProtKB-UniRule"/>
</dbReference>
<dbReference type="GO" id="GO:0008360">
    <property type="term" value="P:regulation of cell shape"/>
    <property type="evidence" value="ECO:0007669"/>
    <property type="project" value="UniProtKB-KW"/>
</dbReference>
<dbReference type="Gene3D" id="3.90.190.20">
    <property type="entry name" value="Mur ligase, C-terminal domain"/>
    <property type="match status" value="1"/>
</dbReference>
<dbReference type="Gene3D" id="3.40.1190.10">
    <property type="entry name" value="Mur-like, catalytic domain"/>
    <property type="match status" value="1"/>
</dbReference>
<dbReference type="Gene3D" id="3.40.1390.10">
    <property type="entry name" value="MurE/MurF, N-terminal domain"/>
    <property type="match status" value="1"/>
</dbReference>
<dbReference type="HAMAP" id="MF_00208">
    <property type="entry name" value="MurE"/>
    <property type="match status" value="1"/>
</dbReference>
<dbReference type="InterPro" id="IPR036565">
    <property type="entry name" value="Mur-like_cat_sf"/>
</dbReference>
<dbReference type="InterPro" id="IPR004101">
    <property type="entry name" value="Mur_ligase_C"/>
</dbReference>
<dbReference type="InterPro" id="IPR036615">
    <property type="entry name" value="Mur_ligase_C_dom_sf"/>
</dbReference>
<dbReference type="InterPro" id="IPR013221">
    <property type="entry name" value="Mur_ligase_cen"/>
</dbReference>
<dbReference type="InterPro" id="IPR000713">
    <property type="entry name" value="Mur_ligase_N"/>
</dbReference>
<dbReference type="InterPro" id="IPR035911">
    <property type="entry name" value="MurE/MurF_N"/>
</dbReference>
<dbReference type="InterPro" id="IPR005761">
    <property type="entry name" value="UDP-N-AcMur-Glu-dNH2Pim_ligase"/>
</dbReference>
<dbReference type="NCBIfam" id="TIGR01085">
    <property type="entry name" value="murE"/>
    <property type="match status" value="1"/>
</dbReference>
<dbReference type="NCBIfam" id="NF001126">
    <property type="entry name" value="PRK00139.1-4"/>
    <property type="match status" value="1"/>
</dbReference>
<dbReference type="PANTHER" id="PTHR23135">
    <property type="entry name" value="MUR LIGASE FAMILY MEMBER"/>
    <property type="match status" value="1"/>
</dbReference>
<dbReference type="PANTHER" id="PTHR23135:SF4">
    <property type="entry name" value="UDP-N-ACETYLMURAMOYL-L-ALANYL-D-GLUTAMATE--2,6-DIAMINOPIMELATE LIGASE MURE HOMOLOG, CHLOROPLASTIC"/>
    <property type="match status" value="1"/>
</dbReference>
<dbReference type="Pfam" id="PF01225">
    <property type="entry name" value="Mur_ligase"/>
    <property type="match status" value="1"/>
</dbReference>
<dbReference type="Pfam" id="PF02875">
    <property type="entry name" value="Mur_ligase_C"/>
    <property type="match status" value="1"/>
</dbReference>
<dbReference type="Pfam" id="PF08245">
    <property type="entry name" value="Mur_ligase_M"/>
    <property type="match status" value="1"/>
</dbReference>
<dbReference type="SUPFAM" id="SSF53623">
    <property type="entry name" value="MurD-like peptide ligases, catalytic domain"/>
    <property type="match status" value="1"/>
</dbReference>
<dbReference type="SUPFAM" id="SSF53244">
    <property type="entry name" value="MurD-like peptide ligases, peptide-binding domain"/>
    <property type="match status" value="1"/>
</dbReference>
<dbReference type="SUPFAM" id="SSF63418">
    <property type="entry name" value="MurE/MurF N-terminal domain"/>
    <property type="match status" value="1"/>
</dbReference>
<proteinExistence type="inferred from homology"/>
<name>MURE_CHLAB</name>
<evidence type="ECO:0000255" key="1">
    <source>
        <dbReference type="HAMAP-Rule" id="MF_00208"/>
    </source>
</evidence>
<feature type="chain" id="PRO_1000012343" description="UDP-N-acetylmuramoyl-L-alanyl-D-glutamate--2,6-diaminopimelate ligase">
    <location>
        <begin position="1"/>
        <end position="483"/>
    </location>
</feature>
<feature type="short sequence motif" description="Meso-diaminopimelate recognition motif">
    <location>
        <begin position="403"/>
        <end position="406"/>
    </location>
</feature>
<feature type="binding site" evidence="1">
    <location>
        <position position="30"/>
    </location>
    <ligand>
        <name>UDP-N-acetyl-alpha-D-muramoyl-L-alanyl-D-glutamate</name>
        <dbReference type="ChEBI" id="CHEBI:83900"/>
    </ligand>
</feature>
<feature type="binding site" evidence="1">
    <location>
        <begin position="109"/>
        <end position="115"/>
    </location>
    <ligand>
        <name>ATP</name>
        <dbReference type="ChEBI" id="CHEBI:30616"/>
    </ligand>
</feature>
<feature type="binding site" evidence="1">
    <location>
        <begin position="151"/>
        <end position="152"/>
    </location>
    <ligand>
        <name>UDP-N-acetyl-alpha-D-muramoyl-L-alanyl-D-glutamate</name>
        <dbReference type="ChEBI" id="CHEBI:83900"/>
    </ligand>
</feature>
<feature type="binding site" evidence="1">
    <location>
        <position position="178"/>
    </location>
    <ligand>
        <name>UDP-N-acetyl-alpha-D-muramoyl-L-alanyl-D-glutamate</name>
        <dbReference type="ChEBI" id="CHEBI:83900"/>
    </ligand>
</feature>
<feature type="binding site" evidence="1">
    <location>
        <position position="186"/>
    </location>
    <ligand>
        <name>UDP-N-acetyl-alpha-D-muramoyl-L-alanyl-D-glutamate</name>
        <dbReference type="ChEBI" id="CHEBI:83900"/>
    </ligand>
</feature>
<feature type="binding site" evidence="1">
    <location>
        <position position="380"/>
    </location>
    <ligand>
        <name>meso-2,6-diaminopimelate</name>
        <dbReference type="ChEBI" id="CHEBI:57791"/>
    </ligand>
</feature>
<feature type="binding site" evidence="1">
    <location>
        <begin position="403"/>
        <end position="406"/>
    </location>
    <ligand>
        <name>meso-2,6-diaminopimelate</name>
        <dbReference type="ChEBI" id="CHEBI:57791"/>
    </ligand>
</feature>
<feature type="binding site" evidence="1">
    <location>
        <position position="453"/>
    </location>
    <ligand>
        <name>meso-2,6-diaminopimelate</name>
        <dbReference type="ChEBI" id="CHEBI:57791"/>
    </ligand>
</feature>
<feature type="binding site" evidence="1">
    <location>
        <position position="457"/>
    </location>
    <ligand>
        <name>meso-2,6-diaminopimelate</name>
        <dbReference type="ChEBI" id="CHEBI:57791"/>
    </ligand>
</feature>
<feature type="modified residue" description="N6-carboxylysine" evidence="1">
    <location>
        <position position="218"/>
    </location>
</feature>
<organism>
    <name type="scientific">Chlamydia abortus (strain DSM 27085 / S26/3)</name>
    <name type="common">Chlamydophila abortus</name>
    <dbReference type="NCBI Taxonomy" id="218497"/>
    <lineage>
        <taxon>Bacteria</taxon>
        <taxon>Pseudomonadati</taxon>
        <taxon>Chlamydiota</taxon>
        <taxon>Chlamydiia</taxon>
        <taxon>Chlamydiales</taxon>
        <taxon>Chlamydiaceae</taxon>
        <taxon>Chlamydia/Chlamydophila group</taxon>
        <taxon>Chlamydia</taxon>
    </lineage>
</organism>
<reference key="1">
    <citation type="journal article" date="2005" name="Genome Res.">
        <title>The Chlamydophila abortus genome sequence reveals an array of variable proteins that contribute to interspecies variation.</title>
        <authorList>
            <person name="Thomson N.R."/>
            <person name="Yeats C."/>
            <person name="Bell K."/>
            <person name="Holden M.T.G."/>
            <person name="Bentley S.D."/>
            <person name="Livingstone M."/>
            <person name="Cerdeno-Tarraga A.-M."/>
            <person name="Harris B."/>
            <person name="Doggett J."/>
            <person name="Ormond D."/>
            <person name="Mungall K."/>
            <person name="Clarke K."/>
            <person name="Feltwell T."/>
            <person name="Hance Z."/>
            <person name="Sanders M."/>
            <person name="Quail M.A."/>
            <person name="Price C."/>
            <person name="Barrell B.G."/>
            <person name="Parkhill J."/>
            <person name="Longbottom D."/>
        </authorList>
    </citation>
    <scope>NUCLEOTIDE SEQUENCE [LARGE SCALE GENOMIC DNA]</scope>
    <source>
        <strain>DSM 27085 / S26/3</strain>
    </source>
</reference>
<comment type="function">
    <text evidence="1">Catalyzes the addition of meso-diaminopimelic acid to the nucleotide precursor UDP-N-acetylmuramoyl-L-alanyl-D-glutamate (UMAG) in the biosynthesis of bacterial cell-wall peptidoglycan.</text>
</comment>
<comment type="catalytic activity">
    <reaction evidence="1">
        <text>UDP-N-acetyl-alpha-D-muramoyl-L-alanyl-D-glutamate + meso-2,6-diaminopimelate + ATP = UDP-N-acetyl-alpha-D-muramoyl-L-alanyl-gamma-D-glutamyl-meso-2,6-diaminopimelate + ADP + phosphate + H(+)</text>
        <dbReference type="Rhea" id="RHEA:23676"/>
        <dbReference type="ChEBI" id="CHEBI:15378"/>
        <dbReference type="ChEBI" id="CHEBI:30616"/>
        <dbReference type="ChEBI" id="CHEBI:43474"/>
        <dbReference type="ChEBI" id="CHEBI:57791"/>
        <dbReference type="ChEBI" id="CHEBI:83900"/>
        <dbReference type="ChEBI" id="CHEBI:83905"/>
        <dbReference type="ChEBI" id="CHEBI:456216"/>
        <dbReference type="EC" id="6.3.2.13"/>
    </reaction>
</comment>
<comment type="cofactor">
    <cofactor evidence="1">
        <name>Mg(2+)</name>
        <dbReference type="ChEBI" id="CHEBI:18420"/>
    </cofactor>
</comment>
<comment type="pathway">
    <text evidence="1">Cell wall biogenesis; peptidoglycan biosynthesis.</text>
</comment>
<comment type="subcellular location">
    <subcellularLocation>
        <location evidence="1">Cytoplasm</location>
    </subcellularLocation>
</comment>
<comment type="PTM">
    <text evidence="1">Carboxylation is probably crucial for Mg(2+) binding and, consequently, for the gamma-phosphate positioning of ATP.</text>
</comment>
<comment type="similarity">
    <text evidence="1">Belongs to the MurCDEF family. MurE subfamily.</text>
</comment>
<sequence length="483" mass="52985">MNLKELLHNTKAKIYGKISSVEVRNLTRDSRNVGVGDIFIAKQGKHCDGNDFSHLAVENGAIAVASSIYNPFLPVVQIISSDLPRLEADLAAKYYGHPSQKLCVVGITGTNGKTTVSHLIKLLFDACDKPAGLIGTIEHILGNSRIQDGYTTPESCLLQKYLAKMVKSHLSAAVMEVSSIGLAVNRLANVDFDVGVLTNLTLDHLDFHSSFEEYKQAKLKLFSMLPSSGLAVVNNDLCDAAQFIEATQAQPITYGIEQHADYQASHVRFSPFGTDFDLLYKGETFACYSPLIGQHNIYNVLAAIAVTHQRLRCDLPHLISVIANVGAPRGRLEPIFSGPCPIYIDYAHTPDALDNVCQTLQALLPQDGRLIVVFGCGGDRDQSKRKIMAQVVEKYGFAVVTTDNPRGEDPEKIINEICSGFLKRNFSIEIDRKQAITYALSIASDRDIVLVAGKGHETYQIFKHQTIAFDDKEIVLGVLSSYV</sequence>
<accession>Q5L6B2</accession>